<organism>
    <name type="scientific">Illicium oligandrum</name>
    <name type="common">Star anise</name>
    <dbReference type="NCBI Taxonomy" id="145286"/>
    <lineage>
        <taxon>Eukaryota</taxon>
        <taxon>Viridiplantae</taxon>
        <taxon>Streptophyta</taxon>
        <taxon>Embryophyta</taxon>
        <taxon>Tracheophyta</taxon>
        <taxon>Spermatophyta</taxon>
        <taxon>Magnoliopsida</taxon>
        <taxon>Austrobaileyales</taxon>
        <taxon>Schisandraceae</taxon>
        <taxon>Illicium</taxon>
    </lineage>
</organism>
<geneLocation type="chloroplast"/>
<proteinExistence type="inferred from homology"/>
<name>RR14_ILLOL</name>
<evidence type="ECO:0000255" key="1">
    <source>
        <dbReference type="HAMAP-Rule" id="MF_00537"/>
    </source>
</evidence>
<evidence type="ECO:0000305" key="2"/>
<feature type="chain" id="PRO_0000354419" description="Small ribosomal subunit protein uS14c">
    <location>
        <begin position="1"/>
        <end position="100"/>
    </location>
</feature>
<comment type="function">
    <text evidence="1">Binds 16S rRNA, required for the assembly of 30S particles.</text>
</comment>
<comment type="subunit">
    <text evidence="1">Part of the 30S ribosomal subunit.</text>
</comment>
<comment type="subcellular location">
    <subcellularLocation>
        <location>Plastid</location>
        <location>Chloroplast</location>
    </subcellularLocation>
</comment>
<comment type="similarity">
    <text evidence="1">Belongs to the universal ribosomal protein uS14 family.</text>
</comment>
<gene>
    <name evidence="1" type="primary">rps14</name>
</gene>
<dbReference type="EMBL" id="EF380354">
    <property type="protein sequence ID" value="ABQ52517.1"/>
    <property type="molecule type" value="Genomic_DNA"/>
</dbReference>
<dbReference type="RefSeq" id="YP_001294268.1">
    <property type="nucleotide sequence ID" value="NC_009600.1"/>
</dbReference>
<dbReference type="SMR" id="A6MMU2"/>
<dbReference type="GeneID" id="5236794"/>
<dbReference type="GO" id="GO:0009507">
    <property type="term" value="C:chloroplast"/>
    <property type="evidence" value="ECO:0007669"/>
    <property type="project" value="UniProtKB-SubCell"/>
</dbReference>
<dbReference type="GO" id="GO:0015935">
    <property type="term" value="C:small ribosomal subunit"/>
    <property type="evidence" value="ECO:0007669"/>
    <property type="project" value="TreeGrafter"/>
</dbReference>
<dbReference type="GO" id="GO:0019843">
    <property type="term" value="F:rRNA binding"/>
    <property type="evidence" value="ECO:0007669"/>
    <property type="project" value="UniProtKB-UniRule"/>
</dbReference>
<dbReference type="GO" id="GO:0003735">
    <property type="term" value="F:structural constituent of ribosome"/>
    <property type="evidence" value="ECO:0007669"/>
    <property type="project" value="InterPro"/>
</dbReference>
<dbReference type="GO" id="GO:0006412">
    <property type="term" value="P:translation"/>
    <property type="evidence" value="ECO:0007669"/>
    <property type="project" value="UniProtKB-UniRule"/>
</dbReference>
<dbReference type="FunFam" id="1.10.287.1480:FF:000001">
    <property type="entry name" value="30S ribosomal protein S14"/>
    <property type="match status" value="1"/>
</dbReference>
<dbReference type="Gene3D" id="1.10.287.1480">
    <property type="match status" value="1"/>
</dbReference>
<dbReference type="HAMAP" id="MF_00537">
    <property type="entry name" value="Ribosomal_uS14_1"/>
    <property type="match status" value="1"/>
</dbReference>
<dbReference type="InterPro" id="IPR001209">
    <property type="entry name" value="Ribosomal_uS14"/>
</dbReference>
<dbReference type="InterPro" id="IPR023036">
    <property type="entry name" value="Ribosomal_uS14_bac/plastid"/>
</dbReference>
<dbReference type="InterPro" id="IPR018271">
    <property type="entry name" value="Ribosomal_uS14_CS"/>
</dbReference>
<dbReference type="NCBIfam" id="NF006477">
    <property type="entry name" value="PRK08881.1"/>
    <property type="match status" value="1"/>
</dbReference>
<dbReference type="PANTHER" id="PTHR19836">
    <property type="entry name" value="30S RIBOSOMAL PROTEIN S14"/>
    <property type="match status" value="1"/>
</dbReference>
<dbReference type="PANTHER" id="PTHR19836:SF19">
    <property type="entry name" value="SMALL RIBOSOMAL SUBUNIT PROTEIN US14M"/>
    <property type="match status" value="1"/>
</dbReference>
<dbReference type="Pfam" id="PF00253">
    <property type="entry name" value="Ribosomal_S14"/>
    <property type="match status" value="1"/>
</dbReference>
<dbReference type="SUPFAM" id="SSF57716">
    <property type="entry name" value="Glucocorticoid receptor-like (DNA-binding domain)"/>
    <property type="match status" value="1"/>
</dbReference>
<dbReference type="PROSITE" id="PS00527">
    <property type="entry name" value="RIBOSOMAL_S14"/>
    <property type="match status" value="1"/>
</dbReference>
<protein>
    <recommendedName>
        <fullName evidence="1">Small ribosomal subunit protein uS14c</fullName>
    </recommendedName>
    <alternativeName>
        <fullName evidence="2">30S ribosomal protein S14, chloroplastic</fullName>
    </alternativeName>
</protein>
<accession>A6MMU2</accession>
<keyword id="KW-0150">Chloroplast</keyword>
<keyword id="KW-0934">Plastid</keyword>
<keyword id="KW-0687">Ribonucleoprotein</keyword>
<keyword id="KW-0689">Ribosomal protein</keyword>
<keyword id="KW-0694">RNA-binding</keyword>
<keyword id="KW-0699">rRNA-binding</keyword>
<sequence>MARKSLIQRERKRDKLEQKYHLIRRSSKKQISKVPSLSDKWEIHGKLQSPPRNSAPIRLHRRCFLTGRPRANYRDFGLSGHVLREMVHACLLPGATRSSW</sequence>
<reference key="1">
    <citation type="journal article" date="2007" name="Mol. Phylogenet. Evol.">
        <title>Phylogenetic and evolutionary implications of complete chloroplast genome sequences of four early-diverging angiosperms: Buxus (Buxaceae), Chloranthus (Chloranthaceae), Dioscorea (Dioscoreaceae), and Illicium (Schisandraceae).</title>
        <authorList>
            <person name="Hansen D.R."/>
            <person name="Dastidar S.G."/>
            <person name="Cai Z."/>
            <person name="Penaflor C."/>
            <person name="Kuehl J.V."/>
            <person name="Boore J.L."/>
            <person name="Jansen R.K."/>
        </authorList>
    </citation>
    <scope>NUCLEOTIDE SEQUENCE [LARGE SCALE GENOMIC DNA]</scope>
</reference>